<gene>
    <name type="primary">15</name>
</gene>
<organism>
    <name type="scientific">Enterobacteria phage T4</name>
    <name type="common">Bacteriophage T4</name>
    <dbReference type="NCBI Taxonomy" id="10665"/>
    <lineage>
        <taxon>Viruses</taxon>
        <taxon>Duplodnaviria</taxon>
        <taxon>Heunggongvirae</taxon>
        <taxon>Uroviricota</taxon>
        <taxon>Caudoviricetes</taxon>
        <taxon>Straboviridae</taxon>
        <taxon>Tevenvirinae</taxon>
        <taxon>Tequatrovirus</taxon>
    </lineage>
</organism>
<comment type="function">
    <text evidence="3">Stabilizes the tail sheath structure and acts as a connector between the end of tail and the portal vertex of the capsid.</text>
</comment>
<comment type="subunit">
    <text evidence="2 3">Hexamer. Interacts with gp3 and gp18 on the bottom part of the hexamer. Interacts with gp13 and gp14 on the top part of the hexamer.</text>
</comment>
<comment type="subcellular location">
    <subcellularLocation>
        <location evidence="2">Virion</location>
    </subcellularLocation>
</comment>
<reference key="1">
    <citation type="journal article" date="1989" name="Nucleic Acids Res.">
        <title>Nucleotide sequences of bacteriophage T4 genes 13, 14 and 15.</title>
        <authorList>
            <person name="Selivanov N.A."/>
            <person name="Prilipov A.G."/>
            <person name="Mesyanzhinov V.V."/>
        </authorList>
    </citation>
    <scope>NUCLEOTIDE SEQUENCE [GENOMIC DNA]</scope>
    <source>
        <strain>D</strain>
    </source>
</reference>
<reference key="2">
    <citation type="journal article" date="2003" name="Microbiol. Mol. Biol. Rev.">
        <title>Bacteriophage T4 genome.</title>
        <authorList>
            <person name="Miller E.S."/>
            <person name="Kutter E."/>
            <person name="Mosig G."/>
            <person name="Arisaka F."/>
            <person name="Kunisawa T."/>
            <person name="Ruger W."/>
        </authorList>
    </citation>
    <scope>NUCLEOTIDE SEQUENCE [LARGE SCALE GENOMIC DNA]</scope>
</reference>
<reference key="3">
    <citation type="journal article" date="2003" name="J. Bacteriol.">
        <title>P15 and P3, the tail completion proteins of bacteriophage T4, both form hexameric rings.</title>
        <authorList>
            <person name="Zhao L."/>
            <person name="Kanamaru S."/>
            <person name="Chaidirek C."/>
            <person name="Arisaka F."/>
        </authorList>
    </citation>
    <scope>SUBUNIT</scope>
    <scope>SUBCELLULAR LOCATION</scope>
</reference>
<reference key="4">
    <citation type="journal article" date="2013" name="J. Mol. Biol.">
        <title>The molecular architecture of the bacteriophage T4 neck.</title>
        <authorList>
            <person name="Fokine A."/>
            <person name="Zhang Z."/>
            <person name="Kanamaru S."/>
            <person name="Bowman V.D."/>
            <person name="Aksyuk A.A."/>
            <person name="Arisaka F."/>
            <person name="Rao V.B."/>
            <person name="Rossmann M.G."/>
        </authorList>
    </citation>
    <scope>X-RAY CRYSTALLOGRAPHY (3.2 ANGSTROMS) OF 1-261</scope>
    <scope>INTERACTION WITH GP3; GP13; GP14 AND GP18</scope>
</reference>
<dbReference type="EMBL" id="X14868">
    <property type="protein sequence ID" value="CAA33009.1"/>
    <property type="molecule type" value="Genomic_DNA"/>
</dbReference>
<dbReference type="EMBL" id="AF158101">
    <property type="protein sequence ID" value="AAD42420.1"/>
    <property type="molecule type" value="Genomic_DNA"/>
</dbReference>
<dbReference type="PIR" id="JF0046">
    <property type="entry name" value="GHBPT4"/>
</dbReference>
<dbReference type="RefSeq" id="NP_049774.1">
    <property type="nucleotide sequence ID" value="NC_000866.4"/>
</dbReference>
<dbReference type="PDB" id="3J2M">
    <property type="method" value="EM"/>
    <property type="resolution" value="15.00 A"/>
    <property type="chains" value="A/B/C/D/E/F=1-272"/>
</dbReference>
<dbReference type="PDB" id="3J2N">
    <property type="method" value="EM"/>
    <property type="resolution" value="16.00 A"/>
    <property type="chains" value="A/B/C/D/E/F=1-272"/>
</dbReference>
<dbReference type="PDB" id="4HUD">
    <property type="method" value="X-ray"/>
    <property type="resolution" value="2.70 A"/>
    <property type="chains" value="A/B/C/D/E/F=1-272"/>
</dbReference>
<dbReference type="PDB" id="4HUH">
    <property type="method" value="X-ray"/>
    <property type="resolution" value="3.20 A"/>
    <property type="chains" value="A/B/C/D/E/F=1-261"/>
</dbReference>
<dbReference type="PDBsum" id="3J2M"/>
<dbReference type="PDBsum" id="3J2N"/>
<dbReference type="PDBsum" id="4HUD"/>
<dbReference type="PDBsum" id="4HUH"/>
<dbReference type="SMR" id="P11112"/>
<dbReference type="TCDB" id="1.K.1.1.1">
    <property type="family name" value="the gp27/5 t4-baseplate (t4-bp) family"/>
</dbReference>
<dbReference type="GeneID" id="1258573"/>
<dbReference type="KEGG" id="vg:1258573"/>
<dbReference type="OrthoDB" id="5632at10239"/>
<dbReference type="EvolutionaryTrace" id="P11112"/>
<dbReference type="Proteomes" id="UP000009087">
    <property type="component" value="Segment"/>
</dbReference>
<dbReference type="GO" id="GO:0044423">
    <property type="term" value="C:virion component"/>
    <property type="evidence" value="ECO:0007669"/>
    <property type="project" value="UniProtKB-KW"/>
</dbReference>
<dbReference type="FunFam" id="3.30.2000.40:FF:000001">
    <property type="entry name" value="Tail sheath stabilizer and completion"/>
    <property type="match status" value="1"/>
</dbReference>
<dbReference type="Gene3D" id="3.30.2000.40">
    <property type="entry name" value="Myoviridae tail sheath stabiliser"/>
    <property type="match status" value="1"/>
</dbReference>
<dbReference type="InterPro" id="IPR031997">
    <property type="entry name" value="T4-gp15_tss"/>
</dbReference>
<dbReference type="InterPro" id="IPR038553">
    <property type="entry name" value="T4-gp15_tss_sf"/>
</dbReference>
<dbReference type="Pfam" id="PF16724">
    <property type="entry name" value="T4-gp15_tss"/>
    <property type="match status" value="1"/>
</dbReference>
<proteinExistence type="evidence at protein level"/>
<evidence type="ECO:0000256" key="1">
    <source>
        <dbReference type="SAM" id="MobiDB-lite"/>
    </source>
</evidence>
<evidence type="ECO:0000269" key="2">
    <source>
    </source>
</evidence>
<evidence type="ECO:0000269" key="3">
    <source>
    </source>
</evidence>
<evidence type="ECO:0000305" key="4"/>
<evidence type="ECO:0007829" key="5">
    <source>
        <dbReference type="PDB" id="4HUD"/>
    </source>
</evidence>
<feature type="chain" id="PRO_0000165005" description="Tail completion protein gp15">
    <location>
        <begin position="1"/>
        <end position="272"/>
    </location>
</feature>
<feature type="region of interest" description="Disordered" evidence="1">
    <location>
        <begin position="240"/>
        <end position="272"/>
    </location>
</feature>
<feature type="compositionally biased region" description="Polar residues" evidence="1">
    <location>
        <begin position="251"/>
        <end position="260"/>
    </location>
</feature>
<feature type="compositionally biased region" description="Pro residues" evidence="1">
    <location>
        <begin position="262"/>
        <end position="272"/>
    </location>
</feature>
<feature type="sequence conflict" description="In Ref. 1; CAA33009." evidence="4" ref="1">
    <original>D</original>
    <variation>G</variation>
    <location>
        <position position="241"/>
    </location>
</feature>
<feature type="sequence conflict" description="In Ref. 1; CAA33009." evidence="4" ref="1">
    <original>R</original>
    <variation>S</variation>
    <location>
        <position position="261"/>
    </location>
</feature>
<feature type="helix" evidence="5">
    <location>
        <begin position="9"/>
        <end position="20"/>
    </location>
</feature>
<feature type="strand" evidence="5">
    <location>
        <begin position="25"/>
        <end position="29"/>
    </location>
</feature>
<feature type="strand" evidence="5">
    <location>
        <begin position="34"/>
        <end position="38"/>
    </location>
</feature>
<feature type="strand" evidence="5">
    <location>
        <begin position="41"/>
        <end position="43"/>
    </location>
</feature>
<feature type="helix" evidence="5">
    <location>
        <begin position="46"/>
        <end position="56"/>
    </location>
</feature>
<feature type="helix" evidence="5">
    <location>
        <begin position="62"/>
        <end position="67"/>
    </location>
</feature>
<feature type="helix" evidence="5">
    <location>
        <begin position="68"/>
        <end position="70"/>
    </location>
</feature>
<feature type="strand" evidence="5">
    <location>
        <begin position="73"/>
        <end position="84"/>
    </location>
</feature>
<feature type="strand" evidence="5">
    <location>
        <begin position="107"/>
        <end position="110"/>
    </location>
</feature>
<feature type="strand" evidence="5">
    <location>
        <begin position="112"/>
        <end position="126"/>
    </location>
</feature>
<feature type="helix" evidence="5">
    <location>
        <begin position="127"/>
        <end position="137"/>
    </location>
</feature>
<feature type="helix" evidence="5">
    <location>
        <begin position="138"/>
        <end position="140"/>
    </location>
</feature>
<feature type="strand" evidence="5">
    <location>
        <begin position="142"/>
        <end position="153"/>
    </location>
</feature>
<feature type="strand" evidence="5">
    <location>
        <begin position="159"/>
        <end position="173"/>
    </location>
</feature>
<feature type="strand" evidence="5">
    <location>
        <begin position="186"/>
        <end position="198"/>
    </location>
</feature>
<feature type="helix" evidence="5">
    <location>
        <begin position="204"/>
        <end position="206"/>
    </location>
</feature>
<feature type="strand" evidence="5">
    <location>
        <begin position="209"/>
        <end position="214"/>
    </location>
</feature>
<feature type="strand" evidence="5">
    <location>
        <begin position="220"/>
        <end position="222"/>
    </location>
</feature>
<feature type="helix" evidence="5">
    <location>
        <begin position="226"/>
        <end position="229"/>
    </location>
</feature>
<sequence>MFGYFYNSSFRRYATLMGDLFSNIQIKRQLESGDKFIRVPITYASKEHFMMKLNKWTSINSQEDVAKVETILPRINLHLVDFSYNAPFKTNILNQNLLQKGATSVVSQYNPSPIKMIYELSIFTRYEDDMFQIVEQILPYFQPHFNTTMYEQFGNDIPFKRDIKIVLMSAAIDEAIDGDNLSRRRIEWSLTFEVNGWMYPPVDDAEGLIRTTYTDFHANTRDLPDGEGVFESVDSEVVPRDIDPEDWDGTVKQTFTSNVNRPTPPEPPGPRT</sequence>
<name>COMPL_BPT4</name>
<accession>P11112</accession>
<accession>Q9T0U7</accession>
<protein>
    <recommendedName>
        <fullName evidence="4">Tail completion protein gp15</fullName>
    </recommendedName>
    <alternativeName>
        <fullName>Gene product 15</fullName>
        <shortName>gp15</shortName>
    </alternativeName>
    <alternativeName>
        <fullName evidence="4">Tail connector protein 15</fullName>
    </alternativeName>
    <alternativeName>
        <fullName evidence="4">Tail terminator protein</fullName>
    </alternativeName>
</protein>
<organismHost>
    <name type="scientific">Escherichia coli</name>
    <dbReference type="NCBI Taxonomy" id="562"/>
</organismHost>
<keyword id="KW-0002">3D-structure</keyword>
<keyword id="KW-0426">Late protein</keyword>
<keyword id="KW-1185">Reference proteome</keyword>
<keyword id="KW-0946">Virion</keyword>